<dbReference type="EMBL" id="CP000038">
    <property type="protein sequence ID" value="AAZ89646.1"/>
    <property type="molecule type" value="Genomic_DNA"/>
</dbReference>
<dbReference type="RefSeq" id="WP_001295377.1">
    <property type="nucleotide sequence ID" value="NC_007384.1"/>
</dbReference>
<dbReference type="SMR" id="Q3YXW6"/>
<dbReference type="GeneID" id="93779098"/>
<dbReference type="KEGG" id="ssn:SSON_3057"/>
<dbReference type="HOGENOM" id="CLU_097408_2_1_6"/>
<dbReference type="Proteomes" id="UP000002529">
    <property type="component" value="Chromosome"/>
</dbReference>
<dbReference type="GO" id="GO:0005829">
    <property type="term" value="C:cytosol"/>
    <property type="evidence" value="ECO:0007669"/>
    <property type="project" value="TreeGrafter"/>
</dbReference>
<dbReference type="GO" id="GO:0005960">
    <property type="term" value="C:glycine cleavage complex"/>
    <property type="evidence" value="ECO:0007669"/>
    <property type="project" value="InterPro"/>
</dbReference>
<dbReference type="GO" id="GO:0019464">
    <property type="term" value="P:glycine decarboxylation via glycine cleavage system"/>
    <property type="evidence" value="ECO:0007669"/>
    <property type="project" value="UniProtKB-UniRule"/>
</dbReference>
<dbReference type="CDD" id="cd06848">
    <property type="entry name" value="GCS_H"/>
    <property type="match status" value="1"/>
</dbReference>
<dbReference type="FunFam" id="2.40.50.100:FF:000011">
    <property type="entry name" value="Glycine cleavage system H protein"/>
    <property type="match status" value="1"/>
</dbReference>
<dbReference type="Gene3D" id="2.40.50.100">
    <property type="match status" value="1"/>
</dbReference>
<dbReference type="HAMAP" id="MF_00272">
    <property type="entry name" value="GcvH"/>
    <property type="match status" value="1"/>
</dbReference>
<dbReference type="InterPro" id="IPR003016">
    <property type="entry name" value="2-oxoA_DH_lipoyl-BS"/>
</dbReference>
<dbReference type="InterPro" id="IPR000089">
    <property type="entry name" value="Biotin_lipoyl"/>
</dbReference>
<dbReference type="InterPro" id="IPR002930">
    <property type="entry name" value="GCV_H"/>
</dbReference>
<dbReference type="InterPro" id="IPR033753">
    <property type="entry name" value="GCV_H/Fam206"/>
</dbReference>
<dbReference type="InterPro" id="IPR017453">
    <property type="entry name" value="GCV_H_sub"/>
</dbReference>
<dbReference type="InterPro" id="IPR011053">
    <property type="entry name" value="Single_hybrid_motif"/>
</dbReference>
<dbReference type="NCBIfam" id="TIGR00527">
    <property type="entry name" value="gcvH"/>
    <property type="match status" value="1"/>
</dbReference>
<dbReference type="NCBIfam" id="NF002270">
    <property type="entry name" value="PRK01202.1"/>
    <property type="match status" value="1"/>
</dbReference>
<dbReference type="PANTHER" id="PTHR11715">
    <property type="entry name" value="GLYCINE CLEAVAGE SYSTEM H PROTEIN"/>
    <property type="match status" value="1"/>
</dbReference>
<dbReference type="PANTHER" id="PTHR11715:SF3">
    <property type="entry name" value="GLYCINE CLEAVAGE SYSTEM H PROTEIN-RELATED"/>
    <property type="match status" value="1"/>
</dbReference>
<dbReference type="Pfam" id="PF01597">
    <property type="entry name" value="GCV_H"/>
    <property type="match status" value="1"/>
</dbReference>
<dbReference type="SUPFAM" id="SSF51230">
    <property type="entry name" value="Single hybrid motif"/>
    <property type="match status" value="1"/>
</dbReference>
<dbReference type="PROSITE" id="PS50968">
    <property type="entry name" value="BIOTINYL_LIPOYL"/>
    <property type="match status" value="1"/>
</dbReference>
<dbReference type="PROSITE" id="PS00189">
    <property type="entry name" value="LIPOYL"/>
    <property type="match status" value="1"/>
</dbReference>
<organism>
    <name type="scientific">Shigella sonnei (strain Ss046)</name>
    <dbReference type="NCBI Taxonomy" id="300269"/>
    <lineage>
        <taxon>Bacteria</taxon>
        <taxon>Pseudomonadati</taxon>
        <taxon>Pseudomonadota</taxon>
        <taxon>Gammaproteobacteria</taxon>
        <taxon>Enterobacterales</taxon>
        <taxon>Enterobacteriaceae</taxon>
        <taxon>Shigella</taxon>
    </lineage>
</organism>
<evidence type="ECO:0000255" key="1">
    <source>
        <dbReference type="HAMAP-Rule" id="MF_00272"/>
    </source>
</evidence>
<evidence type="ECO:0000255" key="2">
    <source>
        <dbReference type="PROSITE-ProRule" id="PRU01066"/>
    </source>
</evidence>
<proteinExistence type="inferred from homology"/>
<keyword id="KW-0450">Lipoyl</keyword>
<keyword id="KW-1185">Reference proteome</keyword>
<reference key="1">
    <citation type="journal article" date="2005" name="Nucleic Acids Res.">
        <title>Genome dynamics and diversity of Shigella species, the etiologic agents of bacillary dysentery.</title>
        <authorList>
            <person name="Yang F."/>
            <person name="Yang J."/>
            <person name="Zhang X."/>
            <person name="Chen L."/>
            <person name="Jiang Y."/>
            <person name="Yan Y."/>
            <person name="Tang X."/>
            <person name="Wang J."/>
            <person name="Xiong Z."/>
            <person name="Dong J."/>
            <person name="Xue Y."/>
            <person name="Zhu Y."/>
            <person name="Xu X."/>
            <person name="Sun L."/>
            <person name="Chen S."/>
            <person name="Nie H."/>
            <person name="Peng J."/>
            <person name="Xu J."/>
            <person name="Wang Y."/>
            <person name="Yuan Z."/>
            <person name="Wen Y."/>
            <person name="Yao Z."/>
            <person name="Shen Y."/>
            <person name="Qiang B."/>
            <person name="Hou Y."/>
            <person name="Yu J."/>
            <person name="Jin Q."/>
        </authorList>
    </citation>
    <scope>NUCLEOTIDE SEQUENCE [LARGE SCALE GENOMIC DNA]</scope>
    <source>
        <strain>Ss046</strain>
    </source>
</reference>
<feature type="chain" id="PRO_0000302440" description="Glycine cleavage system H protein">
    <location>
        <begin position="1"/>
        <end position="129"/>
    </location>
</feature>
<feature type="domain" description="Lipoyl-binding" evidence="2">
    <location>
        <begin position="24"/>
        <end position="106"/>
    </location>
</feature>
<feature type="modified residue" description="N6-lipoyllysine" evidence="1">
    <location>
        <position position="65"/>
    </location>
</feature>
<accession>Q3YXW6</accession>
<sequence length="129" mass="13811">MSNVPAELKYSKEHEWLRKEADGTYTVGITEHAQELLGDMVFVDLPEVGATVSAGDDCAVAESVKAASDIYAPVSGEIVAVNDALSDSPELVNSEPYAGGWIFKIKASDESELESLLDATAYEALLEDE</sequence>
<protein>
    <recommendedName>
        <fullName evidence="1">Glycine cleavage system H protein</fullName>
    </recommendedName>
</protein>
<gene>
    <name evidence="1" type="primary">gcvH</name>
    <name type="ordered locus">SSON_3057</name>
</gene>
<name>GCSH_SHISS</name>
<comment type="function">
    <text evidence="1">The glycine cleavage system catalyzes the degradation of glycine. The H protein shuttles the methylamine group of glycine from the P protein to the T protein.</text>
</comment>
<comment type="cofactor">
    <cofactor evidence="1">
        <name>(R)-lipoate</name>
        <dbReference type="ChEBI" id="CHEBI:83088"/>
    </cofactor>
    <text evidence="1">Binds 1 lipoyl cofactor covalently.</text>
</comment>
<comment type="subunit">
    <text evidence="1">The glycine cleavage system is composed of four proteins: P, T, L and H.</text>
</comment>
<comment type="similarity">
    <text evidence="1">Belongs to the GcvH family.</text>
</comment>